<name>SYN_BACFR</name>
<keyword id="KW-0030">Aminoacyl-tRNA synthetase</keyword>
<keyword id="KW-0067">ATP-binding</keyword>
<keyword id="KW-0963">Cytoplasm</keyword>
<keyword id="KW-0436">Ligase</keyword>
<keyword id="KW-0547">Nucleotide-binding</keyword>
<keyword id="KW-0648">Protein biosynthesis</keyword>
<proteinExistence type="inferred from homology"/>
<sequence>MEKISRTKIVDLMKREDFGAMVNVKGWVRTRRGSKQVNFIALNDGSTINNVQVVVDLANFDEEMLKQITTGACLSVNGVLTESVGAGQKAEVQAREIEVLGTCDNTYPLQKKGHSMEFLREIAHLRPRTNTFGAVFRIRHNMAIAIHKFFHEKGFFYFHTPIITASDCEGAGQMFQVTTMNLYDLKKDENGSIVYDDDFFGKQASLTVSGQLEGELAATALGAIYTFGPTFRAENSNTPRHLAEFWMIEPEVAFNEIQENMDLAEEFIKYCVRWALDNCADDVKFLNDMFDKGLIERLEGVLKEDFVRLPYTEGIKILEEAVAKGHKFEFPVYWGVDLASEHERYLVEDHFKRPVILTDYPKEIKAFYMKQNEDGKTVRAMDVLFPKIGEIIGGSERESDYNKLMMRIEEMHIPMKDMWWYLDTRKFGTCPHSGFGLGFERLLLFVTGMSNIRDVIPFPRTPRNADF</sequence>
<evidence type="ECO:0000255" key="1">
    <source>
        <dbReference type="HAMAP-Rule" id="MF_00534"/>
    </source>
</evidence>
<dbReference type="EC" id="6.1.1.22" evidence="1"/>
<dbReference type="EMBL" id="AP006841">
    <property type="protein sequence ID" value="BAD50758.1"/>
    <property type="molecule type" value="Genomic_DNA"/>
</dbReference>
<dbReference type="RefSeq" id="WP_011203550.1">
    <property type="nucleotide sequence ID" value="NC_006347.1"/>
</dbReference>
<dbReference type="RefSeq" id="YP_101292.1">
    <property type="nucleotide sequence ID" value="NC_006347.1"/>
</dbReference>
<dbReference type="SMR" id="Q64P24"/>
<dbReference type="STRING" id="295405.BF4016"/>
<dbReference type="KEGG" id="bfr:BF4016"/>
<dbReference type="PATRIC" id="fig|295405.11.peg.3864"/>
<dbReference type="HOGENOM" id="CLU_004553_2_0_10"/>
<dbReference type="OrthoDB" id="9802326at2"/>
<dbReference type="Proteomes" id="UP000002197">
    <property type="component" value="Chromosome"/>
</dbReference>
<dbReference type="GO" id="GO:0005737">
    <property type="term" value="C:cytoplasm"/>
    <property type="evidence" value="ECO:0007669"/>
    <property type="project" value="UniProtKB-SubCell"/>
</dbReference>
<dbReference type="GO" id="GO:0004816">
    <property type="term" value="F:asparagine-tRNA ligase activity"/>
    <property type="evidence" value="ECO:0007669"/>
    <property type="project" value="UniProtKB-UniRule"/>
</dbReference>
<dbReference type="GO" id="GO:0005524">
    <property type="term" value="F:ATP binding"/>
    <property type="evidence" value="ECO:0007669"/>
    <property type="project" value="UniProtKB-UniRule"/>
</dbReference>
<dbReference type="GO" id="GO:0003676">
    <property type="term" value="F:nucleic acid binding"/>
    <property type="evidence" value="ECO:0007669"/>
    <property type="project" value="InterPro"/>
</dbReference>
<dbReference type="GO" id="GO:0006421">
    <property type="term" value="P:asparaginyl-tRNA aminoacylation"/>
    <property type="evidence" value="ECO:0007669"/>
    <property type="project" value="UniProtKB-UniRule"/>
</dbReference>
<dbReference type="CDD" id="cd00776">
    <property type="entry name" value="AsxRS_core"/>
    <property type="match status" value="1"/>
</dbReference>
<dbReference type="CDD" id="cd04318">
    <property type="entry name" value="EcAsnRS_like_N"/>
    <property type="match status" value="1"/>
</dbReference>
<dbReference type="FunFam" id="3.30.930.10:FF:000016">
    <property type="entry name" value="Asparagine--tRNA ligase"/>
    <property type="match status" value="1"/>
</dbReference>
<dbReference type="Gene3D" id="3.30.930.10">
    <property type="entry name" value="Bira Bifunctional Protein, Domain 2"/>
    <property type="match status" value="1"/>
</dbReference>
<dbReference type="Gene3D" id="2.40.50.140">
    <property type="entry name" value="Nucleic acid-binding proteins"/>
    <property type="match status" value="1"/>
</dbReference>
<dbReference type="HAMAP" id="MF_00534">
    <property type="entry name" value="Asn_tRNA_synth"/>
    <property type="match status" value="1"/>
</dbReference>
<dbReference type="InterPro" id="IPR004364">
    <property type="entry name" value="Aa-tRNA-synt_II"/>
</dbReference>
<dbReference type="InterPro" id="IPR006195">
    <property type="entry name" value="aa-tRNA-synth_II"/>
</dbReference>
<dbReference type="InterPro" id="IPR045864">
    <property type="entry name" value="aa-tRNA-synth_II/BPL/LPL"/>
</dbReference>
<dbReference type="InterPro" id="IPR004522">
    <property type="entry name" value="Asn-tRNA-ligase"/>
</dbReference>
<dbReference type="InterPro" id="IPR002312">
    <property type="entry name" value="Asp/Asn-tRNA-synth_IIb"/>
</dbReference>
<dbReference type="InterPro" id="IPR012340">
    <property type="entry name" value="NA-bd_OB-fold"/>
</dbReference>
<dbReference type="InterPro" id="IPR004365">
    <property type="entry name" value="NA-bd_OB_tRNA"/>
</dbReference>
<dbReference type="NCBIfam" id="TIGR00457">
    <property type="entry name" value="asnS"/>
    <property type="match status" value="1"/>
</dbReference>
<dbReference type="NCBIfam" id="NF003037">
    <property type="entry name" value="PRK03932.1"/>
    <property type="match status" value="1"/>
</dbReference>
<dbReference type="PANTHER" id="PTHR22594:SF34">
    <property type="entry name" value="ASPARAGINE--TRNA LIGASE, MITOCHONDRIAL-RELATED"/>
    <property type="match status" value="1"/>
</dbReference>
<dbReference type="PANTHER" id="PTHR22594">
    <property type="entry name" value="ASPARTYL/LYSYL-TRNA SYNTHETASE"/>
    <property type="match status" value="1"/>
</dbReference>
<dbReference type="Pfam" id="PF00152">
    <property type="entry name" value="tRNA-synt_2"/>
    <property type="match status" value="1"/>
</dbReference>
<dbReference type="Pfam" id="PF01336">
    <property type="entry name" value="tRNA_anti-codon"/>
    <property type="match status" value="1"/>
</dbReference>
<dbReference type="PRINTS" id="PR01042">
    <property type="entry name" value="TRNASYNTHASP"/>
</dbReference>
<dbReference type="SUPFAM" id="SSF55681">
    <property type="entry name" value="Class II aaRS and biotin synthetases"/>
    <property type="match status" value="1"/>
</dbReference>
<dbReference type="SUPFAM" id="SSF50249">
    <property type="entry name" value="Nucleic acid-binding proteins"/>
    <property type="match status" value="1"/>
</dbReference>
<dbReference type="PROSITE" id="PS50862">
    <property type="entry name" value="AA_TRNA_LIGASE_II"/>
    <property type="match status" value="1"/>
</dbReference>
<organism>
    <name type="scientific">Bacteroides fragilis (strain YCH46)</name>
    <dbReference type="NCBI Taxonomy" id="295405"/>
    <lineage>
        <taxon>Bacteria</taxon>
        <taxon>Pseudomonadati</taxon>
        <taxon>Bacteroidota</taxon>
        <taxon>Bacteroidia</taxon>
        <taxon>Bacteroidales</taxon>
        <taxon>Bacteroidaceae</taxon>
        <taxon>Bacteroides</taxon>
    </lineage>
</organism>
<accession>Q64P24</accession>
<gene>
    <name evidence="1" type="primary">asnS</name>
    <name type="ordered locus">BF4016</name>
</gene>
<reference key="1">
    <citation type="journal article" date="2004" name="Proc. Natl. Acad. Sci. U.S.A.">
        <title>Genomic analysis of Bacteroides fragilis reveals extensive DNA inversions regulating cell surface adaptation.</title>
        <authorList>
            <person name="Kuwahara T."/>
            <person name="Yamashita A."/>
            <person name="Hirakawa H."/>
            <person name="Nakayama H."/>
            <person name="Toh H."/>
            <person name="Okada N."/>
            <person name="Kuhara S."/>
            <person name="Hattori M."/>
            <person name="Hayashi T."/>
            <person name="Ohnishi Y."/>
        </authorList>
    </citation>
    <scope>NUCLEOTIDE SEQUENCE [LARGE SCALE GENOMIC DNA]</scope>
    <source>
        <strain>YCH46</strain>
    </source>
</reference>
<protein>
    <recommendedName>
        <fullName evidence="1">Asparagine--tRNA ligase</fullName>
        <ecNumber evidence="1">6.1.1.22</ecNumber>
    </recommendedName>
    <alternativeName>
        <fullName evidence="1">Asparaginyl-tRNA synthetase</fullName>
        <shortName evidence="1">AsnRS</shortName>
    </alternativeName>
</protein>
<feature type="chain" id="PRO_0000176389" description="Asparagine--tRNA ligase">
    <location>
        <begin position="1"/>
        <end position="467"/>
    </location>
</feature>
<comment type="catalytic activity">
    <reaction evidence="1">
        <text>tRNA(Asn) + L-asparagine + ATP = L-asparaginyl-tRNA(Asn) + AMP + diphosphate + H(+)</text>
        <dbReference type="Rhea" id="RHEA:11180"/>
        <dbReference type="Rhea" id="RHEA-COMP:9659"/>
        <dbReference type="Rhea" id="RHEA-COMP:9674"/>
        <dbReference type="ChEBI" id="CHEBI:15378"/>
        <dbReference type="ChEBI" id="CHEBI:30616"/>
        <dbReference type="ChEBI" id="CHEBI:33019"/>
        <dbReference type="ChEBI" id="CHEBI:58048"/>
        <dbReference type="ChEBI" id="CHEBI:78442"/>
        <dbReference type="ChEBI" id="CHEBI:78515"/>
        <dbReference type="ChEBI" id="CHEBI:456215"/>
        <dbReference type="EC" id="6.1.1.22"/>
    </reaction>
</comment>
<comment type="subunit">
    <text evidence="1">Homodimer.</text>
</comment>
<comment type="subcellular location">
    <subcellularLocation>
        <location evidence="1">Cytoplasm</location>
    </subcellularLocation>
</comment>
<comment type="similarity">
    <text evidence="1">Belongs to the class-II aminoacyl-tRNA synthetase family.</text>
</comment>